<comment type="function">
    <text evidence="1">Might take part in the signal recognition particle (SRP) pathway. This is inferred from the conservation of its genetic proximity to ftsY/ffh. May be a regulatory protein.</text>
</comment>
<comment type="similarity">
    <text evidence="1">Belongs to the UPF0122 family.</text>
</comment>
<reference key="1">
    <citation type="journal article" date="2008" name="DNA Res.">
        <title>Comparative genome analysis of Lactobacillus reuteri and Lactobacillus fermentum reveal a genomic island for reuterin and cobalamin production.</title>
        <authorList>
            <person name="Morita H."/>
            <person name="Toh H."/>
            <person name="Fukuda S."/>
            <person name="Horikawa H."/>
            <person name="Oshima K."/>
            <person name="Suzuki T."/>
            <person name="Murakami M."/>
            <person name="Hisamatsu S."/>
            <person name="Kato Y."/>
            <person name="Takizawa T."/>
            <person name="Fukuoka H."/>
            <person name="Yoshimura T."/>
            <person name="Itoh K."/>
            <person name="O'Sullivan D.J."/>
            <person name="McKay L.L."/>
            <person name="Ohno H."/>
            <person name="Kikuchi J."/>
            <person name="Masaoka T."/>
            <person name="Hattori M."/>
        </authorList>
    </citation>
    <scope>NUCLEOTIDE SEQUENCE [LARGE SCALE GENOMIC DNA]</scope>
    <source>
        <strain>JCM 1112</strain>
    </source>
</reference>
<evidence type="ECO:0000255" key="1">
    <source>
        <dbReference type="HAMAP-Rule" id="MF_00245"/>
    </source>
</evidence>
<accession>B2G823</accession>
<gene>
    <name type="ordered locus">LAR_1089</name>
</gene>
<feature type="chain" id="PRO_1000100815" description="UPF0122 protein LAR_1089">
    <location>
        <begin position="1"/>
        <end position="113"/>
    </location>
</feature>
<protein>
    <recommendedName>
        <fullName evidence="1">UPF0122 protein LAR_1089</fullName>
    </recommendedName>
</protein>
<name>Y1089_LIMRJ</name>
<dbReference type="EMBL" id="AP007281">
    <property type="protein sequence ID" value="BAG25605.1"/>
    <property type="molecule type" value="Genomic_DNA"/>
</dbReference>
<dbReference type="RefSeq" id="WP_003663818.1">
    <property type="nucleotide sequence ID" value="NC_010609.1"/>
</dbReference>
<dbReference type="SMR" id="B2G823"/>
<dbReference type="KEGG" id="lrf:LAR_1089"/>
<dbReference type="HOGENOM" id="CLU_129218_1_0_9"/>
<dbReference type="Gene3D" id="1.10.10.10">
    <property type="entry name" value="Winged helix-like DNA-binding domain superfamily/Winged helix DNA-binding domain"/>
    <property type="match status" value="1"/>
</dbReference>
<dbReference type="HAMAP" id="MF_00245">
    <property type="entry name" value="UPF0122"/>
    <property type="match status" value="1"/>
</dbReference>
<dbReference type="InterPro" id="IPR013324">
    <property type="entry name" value="RNA_pol_sigma_r3/r4-like"/>
</dbReference>
<dbReference type="InterPro" id="IPR007394">
    <property type="entry name" value="UPF0122"/>
</dbReference>
<dbReference type="InterPro" id="IPR054831">
    <property type="entry name" value="UPF0122_fam_protein"/>
</dbReference>
<dbReference type="InterPro" id="IPR036388">
    <property type="entry name" value="WH-like_DNA-bd_sf"/>
</dbReference>
<dbReference type="NCBIfam" id="NF001068">
    <property type="entry name" value="PRK00118.1-4"/>
    <property type="match status" value="1"/>
</dbReference>
<dbReference type="NCBIfam" id="NF001070">
    <property type="entry name" value="PRK00118.1-6"/>
    <property type="match status" value="1"/>
</dbReference>
<dbReference type="NCBIfam" id="NF045758">
    <property type="entry name" value="YlxM"/>
    <property type="match status" value="1"/>
</dbReference>
<dbReference type="PANTHER" id="PTHR40083">
    <property type="entry name" value="UPF0122 PROTEIN CBO2450/CLC_2298"/>
    <property type="match status" value="1"/>
</dbReference>
<dbReference type="PANTHER" id="PTHR40083:SF1">
    <property type="entry name" value="UPF0122 PROTEIN YLXM"/>
    <property type="match status" value="1"/>
</dbReference>
<dbReference type="Pfam" id="PF04297">
    <property type="entry name" value="UPF0122"/>
    <property type="match status" value="1"/>
</dbReference>
<dbReference type="SUPFAM" id="SSF88659">
    <property type="entry name" value="Sigma3 and sigma4 domains of RNA polymerase sigma factors"/>
    <property type="match status" value="1"/>
</dbReference>
<sequence length="113" mass="13716">MEIEKNYRINSLFEFYQPLLTKKQNDYLELYYGDDYSLGEIAENFHVSRQAVYDNIKRTESILEDYEAKLHLYAEFQVRNQQADRIQRYVRENYPDDATLNHLVNHLESLEEE</sequence>
<proteinExistence type="inferred from homology"/>
<organism>
    <name type="scientific">Limosilactobacillus reuteri subsp. reuteri (strain JCM 1112)</name>
    <name type="common">Lactobacillus reuteri</name>
    <dbReference type="NCBI Taxonomy" id="557433"/>
    <lineage>
        <taxon>Bacteria</taxon>
        <taxon>Bacillati</taxon>
        <taxon>Bacillota</taxon>
        <taxon>Bacilli</taxon>
        <taxon>Lactobacillales</taxon>
        <taxon>Lactobacillaceae</taxon>
        <taxon>Limosilactobacillus</taxon>
    </lineage>
</organism>